<protein>
    <recommendedName>
        <fullName evidence="1">N-acetylmuramic acid 6-phosphate etherase</fullName>
        <shortName evidence="1">MurNAc-6-P etherase</shortName>
        <ecNumber evidence="1">4.2.1.126</ecNumber>
    </recommendedName>
    <alternativeName>
        <fullName evidence="1">N-acetylmuramic acid 6-phosphate hydrolase</fullName>
    </alternativeName>
    <alternativeName>
        <fullName evidence="1">N-acetylmuramic acid 6-phosphate lyase</fullName>
    </alternativeName>
</protein>
<accession>B7MHT0</accession>
<organism>
    <name type="scientific">Escherichia coli O45:K1 (strain S88 / ExPEC)</name>
    <dbReference type="NCBI Taxonomy" id="585035"/>
    <lineage>
        <taxon>Bacteria</taxon>
        <taxon>Pseudomonadati</taxon>
        <taxon>Pseudomonadota</taxon>
        <taxon>Gammaproteobacteria</taxon>
        <taxon>Enterobacterales</taxon>
        <taxon>Enterobacteriaceae</taxon>
        <taxon>Escherichia</taxon>
    </lineage>
</organism>
<gene>
    <name evidence="1" type="primary">murQ</name>
    <name type="ordered locus">ECS88_2616</name>
</gene>
<sequence>MQLEKMITEGSNAASAEIDRVSTLEMCRIINDEDKTVPLAVERVLPDIAAAIDVIHTQVSGGGRLIYLGAGTSGRLGILDASECPPTYGVKPGLVVGLIAGGEYAIQHAVEGAEDSREGGVNDLKNINLTAQDVVVGIAASGRTPYVIAGLEYARQLGCRTVGISCNPGSAVSSTAEFAITPVVGAEVVTGSSRMKAGTAQKLVLNMLSTGLMIKSGKVFGNLMVDVVATNEKLHVRQVNIVKNATGCNAEQAEAALIACERNCKTAIVMVLKNLDADEAKKCLDQHGGFIRKALEKE</sequence>
<dbReference type="EC" id="4.2.1.126" evidence="1"/>
<dbReference type="EMBL" id="CU928161">
    <property type="protein sequence ID" value="CAR03888.1"/>
    <property type="molecule type" value="Genomic_DNA"/>
</dbReference>
<dbReference type="RefSeq" id="WP_001175632.1">
    <property type="nucleotide sequence ID" value="NC_011742.1"/>
</dbReference>
<dbReference type="SMR" id="B7MHT0"/>
<dbReference type="KEGG" id="ecz:ECS88_2616"/>
<dbReference type="HOGENOM" id="CLU_049049_1_1_6"/>
<dbReference type="UniPathway" id="UPA00342"/>
<dbReference type="UniPathway" id="UPA00343"/>
<dbReference type="UniPathway" id="UPA00544"/>
<dbReference type="Proteomes" id="UP000000747">
    <property type="component" value="Chromosome"/>
</dbReference>
<dbReference type="GO" id="GO:0097367">
    <property type="term" value="F:carbohydrate derivative binding"/>
    <property type="evidence" value="ECO:0007669"/>
    <property type="project" value="InterPro"/>
</dbReference>
<dbReference type="GO" id="GO:0016835">
    <property type="term" value="F:carbon-oxygen lyase activity"/>
    <property type="evidence" value="ECO:0007669"/>
    <property type="project" value="UniProtKB-UniRule"/>
</dbReference>
<dbReference type="GO" id="GO:0016803">
    <property type="term" value="F:ether hydrolase activity"/>
    <property type="evidence" value="ECO:0007669"/>
    <property type="project" value="TreeGrafter"/>
</dbReference>
<dbReference type="GO" id="GO:0097175">
    <property type="term" value="P:1,6-anhydro-N-acetyl-beta-muramic acid catabolic process"/>
    <property type="evidence" value="ECO:0007669"/>
    <property type="project" value="UniProtKB-UniRule"/>
</dbReference>
<dbReference type="GO" id="GO:0046348">
    <property type="term" value="P:amino sugar catabolic process"/>
    <property type="evidence" value="ECO:0007669"/>
    <property type="project" value="InterPro"/>
</dbReference>
<dbReference type="GO" id="GO:0097173">
    <property type="term" value="P:N-acetylmuramic acid catabolic process"/>
    <property type="evidence" value="ECO:0007669"/>
    <property type="project" value="UniProtKB-UniPathway"/>
</dbReference>
<dbReference type="GO" id="GO:0009254">
    <property type="term" value="P:peptidoglycan turnover"/>
    <property type="evidence" value="ECO:0007669"/>
    <property type="project" value="UniProtKB-UniRule"/>
</dbReference>
<dbReference type="CDD" id="cd05007">
    <property type="entry name" value="SIS_Etherase"/>
    <property type="match status" value="1"/>
</dbReference>
<dbReference type="FunFam" id="1.10.8.1080:FF:000001">
    <property type="entry name" value="N-acetylmuramic acid 6-phosphate etherase"/>
    <property type="match status" value="1"/>
</dbReference>
<dbReference type="FunFam" id="3.40.50.10490:FF:000014">
    <property type="entry name" value="N-acetylmuramic acid 6-phosphate etherase"/>
    <property type="match status" value="1"/>
</dbReference>
<dbReference type="Gene3D" id="1.10.8.1080">
    <property type="match status" value="1"/>
</dbReference>
<dbReference type="Gene3D" id="3.40.50.10490">
    <property type="entry name" value="Glucose-6-phosphate isomerase like protein, domain 1"/>
    <property type="match status" value="1"/>
</dbReference>
<dbReference type="HAMAP" id="MF_00068">
    <property type="entry name" value="MurQ"/>
    <property type="match status" value="1"/>
</dbReference>
<dbReference type="InterPro" id="IPR005488">
    <property type="entry name" value="Etherase_MurQ"/>
</dbReference>
<dbReference type="InterPro" id="IPR005486">
    <property type="entry name" value="Glucokinase_regulatory_CS"/>
</dbReference>
<dbReference type="InterPro" id="IPR040190">
    <property type="entry name" value="MURQ/GCKR"/>
</dbReference>
<dbReference type="InterPro" id="IPR001347">
    <property type="entry name" value="SIS_dom"/>
</dbReference>
<dbReference type="InterPro" id="IPR046348">
    <property type="entry name" value="SIS_dom_sf"/>
</dbReference>
<dbReference type="NCBIfam" id="TIGR00274">
    <property type="entry name" value="N-acetylmuramic acid 6-phosphate etherase"/>
    <property type="match status" value="1"/>
</dbReference>
<dbReference type="NCBIfam" id="NF003915">
    <property type="entry name" value="PRK05441.1"/>
    <property type="match status" value="1"/>
</dbReference>
<dbReference type="NCBIfam" id="NF009222">
    <property type="entry name" value="PRK12570.1"/>
    <property type="match status" value="1"/>
</dbReference>
<dbReference type="PANTHER" id="PTHR10088">
    <property type="entry name" value="GLUCOKINASE REGULATORY PROTEIN"/>
    <property type="match status" value="1"/>
</dbReference>
<dbReference type="PANTHER" id="PTHR10088:SF4">
    <property type="entry name" value="GLUCOKINASE REGULATORY PROTEIN"/>
    <property type="match status" value="1"/>
</dbReference>
<dbReference type="Pfam" id="PF22645">
    <property type="entry name" value="GKRP_SIS_N"/>
    <property type="match status" value="1"/>
</dbReference>
<dbReference type="SUPFAM" id="SSF53697">
    <property type="entry name" value="SIS domain"/>
    <property type="match status" value="1"/>
</dbReference>
<dbReference type="PROSITE" id="PS01272">
    <property type="entry name" value="GCKR"/>
    <property type="match status" value="1"/>
</dbReference>
<dbReference type="PROSITE" id="PS51464">
    <property type="entry name" value="SIS"/>
    <property type="match status" value="1"/>
</dbReference>
<keyword id="KW-0119">Carbohydrate metabolism</keyword>
<keyword id="KW-0456">Lyase</keyword>
<keyword id="KW-1185">Reference proteome</keyword>
<feature type="chain" id="PRO_1000116992" description="N-acetylmuramic acid 6-phosphate etherase">
    <location>
        <begin position="1"/>
        <end position="298"/>
    </location>
</feature>
<feature type="domain" description="SIS" evidence="1">
    <location>
        <begin position="55"/>
        <end position="218"/>
    </location>
</feature>
<feature type="active site" description="Proton donor" evidence="1">
    <location>
        <position position="83"/>
    </location>
</feature>
<feature type="active site" evidence="1">
    <location>
        <position position="114"/>
    </location>
</feature>
<proteinExistence type="inferred from homology"/>
<reference key="1">
    <citation type="journal article" date="2009" name="PLoS Genet.">
        <title>Organised genome dynamics in the Escherichia coli species results in highly diverse adaptive paths.</title>
        <authorList>
            <person name="Touchon M."/>
            <person name="Hoede C."/>
            <person name="Tenaillon O."/>
            <person name="Barbe V."/>
            <person name="Baeriswyl S."/>
            <person name="Bidet P."/>
            <person name="Bingen E."/>
            <person name="Bonacorsi S."/>
            <person name="Bouchier C."/>
            <person name="Bouvet O."/>
            <person name="Calteau A."/>
            <person name="Chiapello H."/>
            <person name="Clermont O."/>
            <person name="Cruveiller S."/>
            <person name="Danchin A."/>
            <person name="Diard M."/>
            <person name="Dossat C."/>
            <person name="Karoui M.E."/>
            <person name="Frapy E."/>
            <person name="Garry L."/>
            <person name="Ghigo J.M."/>
            <person name="Gilles A.M."/>
            <person name="Johnson J."/>
            <person name="Le Bouguenec C."/>
            <person name="Lescat M."/>
            <person name="Mangenot S."/>
            <person name="Martinez-Jehanne V."/>
            <person name="Matic I."/>
            <person name="Nassif X."/>
            <person name="Oztas S."/>
            <person name="Petit M.A."/>
            <person name="Pichon C."/>
            <person name="Rouy Z."/>
            <person name="Ruf C.S."/>
            <person name="Schneider D."/>
            <person name="Tourret J."/>
            <person name="Vacherie B."/>
            <person name="Vallenet D."/>
            <person name="Medigue C."/>
            <person name="Rocha E.P.C."/>
            <person name="Denamur E."/>
        </authorList>
    </citation>
    <scope>NUCLEOTIDE SEQUENCE [LARGE SCALE GENOMIC DNA]</scope>
    <source>
        <strain>S88 / ExPEC</strain>
    </source>
</reference>
<comment type="function">
    <text evidence="1">Specifically catalyzes the cleavage of the D-lactyl ether substituent of MurNAc 6-phosphate, producing GlcNAc 6-phosphate and D-lactate. Together with AnmK, is also required for the utilization of anhydro-N-acetylmuramic acid (anhMurNAc) either imported from the medium or derived from its own cell wall murein, and thus plays a role in cell wall recycling.</text>
</comment>
<comment type="catalytic activity">
    <reaction evidence="1">
        <text>N-acetyl-D-muramate 6-phosphate + H2O = N-acetyl-D-glucosamine 6-phosphate + (R)-lactate</text>
        <dbReference type="Rhea" id="RHEA:26410"/>
        <dbReference type="ChEBI" id="CHEBI:15377"/>
        <dbReference type="ChEBI" id="CHEBI:16004"/>
        <dbReference type="ChEBI" id="CHEBI:57513"/>
        <dbReference type="ChEBI" id="CHEBI:58722"/>
        <dbReference type="EC" id="4.2.1.126"/>
    </reaction>
</comment>
<comment type="pathway">
    <text evidence="1">Amino-sugar metabolism; 1,6-anhydro-N-acetylmuramate degradation.</text>
</comment>
<comment type="pathway">
    <text evidence="1">Amino-sugar metabolism; N-acetylmuramate degradation.</text>
</comment>
<comment type="pathway">
    <text evidence="1">Cell wall biogenesis; peptidoglycan recycling.</text>
</comment>
<comment type="subunit">
    <text evidence="1">Homodimer.</text>
</comment>
<comment type="induction">
    <text evidence="1">Induced by MurNAc 6-phosphate that releases the repressor MurR from the DNA. Repressed by MurR in the absence of MurNAc 6-phosphate.</text>
</comment>
<comment type="miscellaneous">
    <text evidence="1">A lyase-type mechanism (elimination/hydration) is suggested for the cleavage of the lactyl ether bond of MurNAc 6-phosphate, with the formation of an alpha,beta-unsaturated aldehyde intermediate with (E)-stereochemistry, followed by the syn addition of water to give product.</text>
</comment>
<comment type="similarity">
    <text evidence="1">Belongs to the GCKR-like family. MurNAc-6-P etherase subfamily.</text>
</comment>
<evidence type="ECO:0000255" key="1">
    <source>
        <dbReference type="HAMAP-Rule" id="MF_00068"/>
    </source>
</evidence>
<name>MURQ_ECO45</name>